<keyword id="KW-0227">DNA damage</keyword>
<keyword id="KW-0233">DNA recombination</keyword>
<keyword id="KW-0234">DNA repair</keyword>
<keyword id="KW-0238">DNA-binding</keyword>
<keyword id="KW-1185">Reference proteome</keyword>
<protein>
    <recommendedName>
        <fullName evidence="1">Non-homologous end joining protein Ku 1</fullName>
    </recommendedName>
</protein>
<name>KU1_SACEN</name>
<comment type="function">
    <text evidence="1">With LigD forms a non-homologous end joining (NHEJ) DNA repair enzyme, which repairs dsDNA breaks with reduced fidelity. Binds linear dsDNA with 5'- and 3'- overhangs but not closed circular dsDNA nor ssDNA. Recruits and stimulates the ligase activity of LigD.</text>
</comment>
<comment type="subunit">
    <text evidence="1">Homodimer. Interacts with LigD.</text>
</comment>
<comment type="similarity">
    <text evidence="1">Belongs to the prokaryotic Ku family.</text>
</comment>
<organism>
    <name type="scientific">Saccharopolyspora erythraea (strain ATCC 11635 / DSM 40517 / JCM 4748 / NBRC 13426 / NCIMB 8594 / NRRL 2338)</name>
    <dbReference type="NCBI Taxonomy" id="405948"/>
    <lineage>
        <taxon>Bacteria</taxon>
        <taxon>Bacillati</taxon>
        <taxon>Actinomycetota</taxon>
        <taxon>Actinomycetes</taxon>
        <taxon>Pseudonocardiales</taxon>
        <taxon>Pseudonocardiaceae</taxon>
        <taxon>Saccharopolyspora</taxon>
    </lineage>
</organism>
<feature type="chain" id="PRO_0000389196" description="Non-homologous end joining protein Ku 1">
    <location>
        <begin position="1"/>
        <end position="324"/>
    </location>
</feature>
<feature type="domain" description="Ku" evidence="1">
    <location>
        <begin position="10"/>
        <end position="193"/>
    </location>
</feature>
<feature type="region of interest" description="Disordered" evidence="2">
    <location>
        <begin position="256"/>
        <end position="324"/>
    </location>
</feature>
<feature type="compositionally biased region" description="Basic and acidic residues" evidence="2">
    <location>
        <begin position="281"/>
        <end position="292"/>
    </location>
</feature>
<accession>A4FFJ9</accession>
<sequence>MPRKIWTGSINFGLVTIPVGLYAATEDHSIQFHQYERGTTDRVRMKRVNERTGDEVGYNDIVKGREVGGVLVAVEPSELDEIAPKLSRTIDINTFVDLNAIDPVYFQKTYWLAPGSKEHFRPYNLLRRAMDETNQVGIATFVMRGREYLTAVRAEDSVLALNTMFFADEIRDPGELVGDASSVAKPSDKEIQMATMIIESMSGDWEPEQYEDTYTARVEKLLEDKAEGRAPEVEEAPAEPSDVIDLTEALRRSVDQARRGRGGQVPRQRDEEQDVSALSKAELDKKAKELGIKGRSKMKRADLEAAVAESQGSASGGRRRRRAS</sequence>
<evidence type="ECO:0000255" key="1">
    <source>
        <dbReference type="HAMAP-Rule" id="MF_01875"/>
    </source>
</evidence>
<evidence type="ECO:0000256" key="2">
    <source>
        <dbReference type="SAM" id="MobiDB-lite"/>
    </source>
</evidence>
<proteinExistence type="inferred from homology"/>
<dbReference type="EMBL" id="AM420293">
    <property type="protein sequence ID" value="CAM02824.1"/>
    <property type="molecule type" value="Genomic_DNA"/>
</dbReference>
<dbReference type="RefSeq" id="WP_009942150.1">
    <property type="nucleotide sequence ID" value="NC_009142.1"/>
</dbReference>
<dbReference type="SMR" id="A4FFJ9"/>
<dbReference type="STRING" id="405948.SACE_3550"/>
<dbReference type="KEGG" id="sen:SACE_3550"/>
<dbReference type="eggNOG" id="COG1273">
    <property type="taxonomic scope" value="Bacteria"/>
</dbReference>
<dbReference type="HOGENOM" id="CLU_048975_1_1_11"/>
<dbReference type="OrthoDB" id="9795084at2"/>
<dbReference type="Proteomes" id="UP000006728">
    <property type="component" value="Chromosome"/>
</dbReference>
<dbReference type="GO" id="GO:0003690">
    <property type="term" value="F:double-stranded DNA binding"/>
    <property type="evidence" value="ECO:0007669"/>
    <property type="project" value="UniProtKB-UniRule"/>
</dbReference>
<dbReference type="GO" id="GO:0006310">
    <property type="term" value="P:DNA recombination"/>
    <property type="evidence" value="ECO:0007669"/>
    <property type="project" value="UniProtKB-KW"/>
</dbReference>
<dbReference type="GO" id="GO:0006353">
    <property type="term" value="P:DNA-templated transcription termination"/>
    <property type="evidence" value="ECO:0007669"/>
    <property type="project" value="InterPro"/>
</dbReference>
<dbReference type="GO" id="GO:0006303">
    <property type="term" value="P:double-strand break repair via nonhomologous end joining"/>
    <property type="evidence" value="ECO:0007669"/>
    <property type="project" value="UniProtKB-UniRule"/>
</dbReference>
<dbReference type="CDD" id="cd00789">
    <property type="entry name" value="KU_like"/>
    <property type="match status" value="1"/>
</dbReference>
<dbReference type="Gene3D" id="2.40.290.10">
    <property type="match status" value="1"/>
</dbReference>
<dbReference type="HAMAP" id="MF_01875">
    <property type="entry name" value="Prokaryotic_Ku"/>
    <property type="match status" value="1"/>
</dbReference>
<dbReference type="InterPro" id="IPR006164">
    <property type="entry name" value="Ku70/Ku80_beta-barrel_dom"/>
</dbReference>
<dbReference type="InterPro" id="IPR009187">
    <property type="entry name" value="Prok_Ku"/>
</dbReference>
<dbReference type="InterPro" id="IPR011112">
    <property type="entry name" value="Rho-like_N"/>
</dbReference>
<dbReference type="InterPro" id="IPR016194">
    <property type="entry name" value="SPOC-like_C_dom_sf"/>
</dbReference>
<dbReference type="NCBIfam" id="TIGR02772">
    <property type="entry name" value="Ku_bact"/>
    <property type="match status" value="1"/>
</dbReference>
<dbReference type="PANTHER" id="PTHR41251">
    <property type="entry name" value="NON-HOMOLOGOUS END JOINING PROTEIN KU"/>
    <property type="match status" value="1"/>
</dbReference>
<dbReference type="PANTHER" id="PTHR41251:SF1">
    <property type="entry name" value="NON-HOMOLOGOUS END JOINING PROTEIN KU"/>
    <property type="match status" value="1"/>
</dbReference>
<dbReference type="Pfam" id="PF02735">
    <property type="entry name" value="Ku"/>
    <property type="match status" value="1"/>
</dbReference>
<dbReference type="PIRSF" id="PIRSF006493">
    <property type="entry name" value="Prok_Ku"/>
    <property type="match status" value="1"/>
</dbReference>
<dbReference type="SMART" id="SM00559">
    <property type="entry name" value="Ku78"/>
    <property type="match status" value="1"/>
</dbReference>
<dbReference type="SMART" id="SM00959">
    <property type="entry name" value="Rho_N"/>
    <property type="match status" value="1"/>
</dbReference>
<dbReference type="SUPFAM" id="SSF100939">
    <property type="entry name" value="SPOC domain-like"/>
    <property type="match status" value="1"/>
</dbReference>
<reference key="1">
    <citation type="journal article" date="2007" name="Nat. Biotechnol.">
        <title>Complete genome sequence of the erythromycin-producing bacterium Saccharopolyspora erythraea NRRL23338.</title>
        <authorList>
            <person name="Oliynyk M."/>
            <person name="Samborskyy M."/>
            <person name="Lester J.B."/>
            <person name="Mironenko T."/>
            <person name="Scott N."/>
            <person name="Dickens S."/>
            <person name="Haydock S.F."/>
            <person name="Leadlay P.F."/>
        </authorList>
    </citation>
    <scope>NUCLEOTIDE SEQUENCE [LARGE SCALE GENOMIC DNA]</scope>
    <source>
        <strain>ATCC 11635 / DSM 40517 / JCM 4748 / NBRC 13426 / NCIMB 8594 / NRRL 2338</strain>
    </source>
</reference>
<gene>
    <name evidence="1" type="primary">ku1</name>
    <name type="ordered locus">SACE_3550</name>
</gene>